<feature type="chain" id="PRO_0000375128" description="B3 domain-containing protein At2g31420">
    <location>
        <begin position="1"/>
        <end position="209"/>
    </location>
</feature>
<feature type="DNA-binding region" description="TF-B3" evidence="1">
    <location>
        <begin position="101"/>
        <end position="198"/>
    </location>
</feature>
<organism>
    <name type="scientific">Arabidopsis thaliana</name>
    <name type="common">Mouse-ear cress</name>
    <dbReference type="NCBI Taxonomy" id="3702"/>
    <lineage>
        <taxon>Eukaryota</taxon>
        <taxon>Viridiplantae</taxon>
        <taxon>Streptophyta</taxon>
        <taxon>Embryophyta</taxon>
        <taxon>Tracheophyta</taxon>
        <taxon>Spermatophyta</taxon>
        <taxon>Magnoliopsida</taxon>
        <taxon>eudicotyledons</taxon>
        <taxon>Gunneridae</taxon>
        <taxon>Pentapetalae</taxon>
        <taxon>rosids</taxon>
        <taxon>malvids</taxon>
        <taxon>Brassicales</taxon>
        <taxon>Brassicaceae</taxon>
        <taxon>Camelineae</taxon>
        <taxon>Arabidopsis</taxon>
    </lineage>
</organism>
<dbReference type="EMBL" id="AC007169">
    <property type="protein sequence ID" value="AAD26477.1"/>
    <property type="molecule type" value="Genomic_DNA"/>
</dbReference>
<dbReference type="EMBL" id="CP002685">
    <property type="protein sequence ID" value="AEC08544.1"/>
    <property type="molecule type" value="Genomic_DNA"/>
</dbReference>
<dbReference type="EMBL" id="AB493572">
    <property type="protein sequence ID" value="BAH30410.1"/>
    <property type="molecule type" value="Genomic_DNA"/>
</dbReference>
<dbReference type="PIR" id="E84720">
    <property type="entry name" value="E84720"/>
</dbReference>
<dbReference type="RefSeq" id="NP_180700.1">
    <property type="nucleotide sequence ID" value="NM_128699.3"/>
</dbReference>
<dbReference type="PaxDb" id="3702-AT2G31420.1"/>
<dbReference type="EnsemblPlants" id="AT2G31420.1">
    <property type="protein sequence ID" value="AT2G31420.1"/>
    <property type="gene ID" value="AT2G31420"/>
</dbReference>
<dbReference type="GeneID" id="817700"/>
<dbReference type="Gramene" id="AT2G31420.1">
    <property type="protein sequence ID" value="AT2G31420.1"/>
    <property type="gene ID" value="AT2G31420"/>
</dbReference>
<dbReference type="KEGG" id="ath:AT2G31420"/>
<dbReference type="Araport" id="AT2G31420"/>
<dbReference type="TAIR" id="AT2G31420"/>
<dbReference type="HOGENOM" id="CLU_1317032_0_0_1"/>
<dbReference type="InParanoid" id="Q9SIC7"/>
<dbReference type="OMA" id="MRKENGY"/>
<dbReference type="OrthoDB" id="1080602at2759"/>
<dbReference type="PhylomeDB" id="Q9SIC7"/>
<dbReference type="PRO" id="PR:Q9SIC7"/>
<dbReference type="Proteomes" id="UP000006548">
    <property type="component" value="Chromosome 2"/>
</dbReference>
<dbReference type="ExpressionAtlas" id="Q9SIC7">
    <property type="expression patterns" value="baseline and differential"/>
</dbReference>
<dbReference type="GO" id="GO:0005634">
    <property type="term" value="C:nucleus"/>
    <property type="evidence" value="ECO:0007669"/>
    <property type="project" value="UniProtKB-SubCell"/>
</dbReference>
<dbReference type="GO" id="GO:0003677">
    <property type="term" value="F:DNA binding"/>
    <property type="evidence" value="ECO:0007669"/>
    <property type="project" value="UniProtKB-KW"/>
</dbReference>
<dbReference type="Gene3D" id="2.40.330.10">
    <property type="entry name" value="DNA-binding pseudobarrel domain"/>
    <property type="match status" value="1"/>
</dbReference>
<dbReference type="InterPro" id="IPR005508">
    <property type="entry name" value="At2g31720-like"/>
</dbReference>
<dbReference type="InterPro" id="IPR003340">
    <property type="entry name" value="B3_DNA-bd"/>
</dbReference>
<dbReference type="InterPro" id="IPR015300">
    <property type="entry name" value="DNA-bd_pseudobarrel_sf"/>
</dbReference>
<dbReference type="PANTHER" id="PTHR31541">
    <property type="entry name" value="B3 DOMAIN PLANT PROTEIN-RELATED"/>
    <property type="match status" value="1"/>
</dbReference>
<dbReference type="PANTHER" id="PTHR31541:SF56">
    <property type="entry name" value="DOMAIN PROTEIN, PUTATIVE (DUF313)-RELATED"/>
    <property type="match status" value="1"/>
</dbReference>
<dbReference type="Pfam" id="PF03754">
    <property type="entry name" value="At2g31720-like"/>
    <property type="match status" value="1"/>
</dbReference>
<dbReference type="SUPFAM" id="SSF101936">
    <property type="entry name" value="DNA-binding pseudobarrel domain"/>
    <property type="match status" value="1"/>
</dbReference>
<dbReference type="PROSITE" id="PS50863">
    <property type="entry name" value="B3"/>
    <property type="match status" value="1"/>
</dbReference>
<proteinExistence type="inferred from homology"/>
<comment type="subcellular location">
    <subcellularLocation>
        <location evidence="1">Nucleus</location>
    </subcellularLocation>
</comment>
<accession>Q9SIC7</accession>
<keyword id="KW-0238">DNA-binding</keyword>
<keyword id="KW-0539">Nucleus</keyword>
<keyword id="KW-1185">Reference proteome</keyword>
<keyword id="KW-0804">Transcription</keyword>
<keyword id="KW-0805">Transcription regulation</keyword>
<reference key="1">
    <citation type="journal article" date="1999" name="Nature">
        <title>Sequence and analysis of chromosome 2 of the plant Arabidopsis thaliana.</title>
        <authorList>
            <person name="Lin X."/>
            <person name="Kaul S."/>
            <person name="Rounsley S.D."/>
            <person name="Shea T.P."/>
            <person name="Benito M.-I."/>
            <person name="Town C.D."/>
            <person name="Fujii C.Y."/>
            <person name="Mason T.M."/>
            <person name="Bowman C.L."/>
            <person name="Barnstead M.E."/>
            <person name="Feldblyum T.V."/>
            <person name="Buell C.R."/>
            <person name="Ketchum K.A."/>
            <person name="Lee J.J."/>
            <person name="Ronning C.M."/>
            <person name="Koo H.L."/>
            <person name="Moffat K.S."/>
            <person name="Cronin L.A."/>
            <person name="Shen M."/>
            <person name="Pai G."/>
            <person name="Van Aken S."/>
            <person name="Umayam L."/>
            <person name="Tallon L.J."/>
            <person name="Gill J.E."/>
            <person name="Adams M.D."/>
            <person name="Carrera A.J."/>
            <person name="Creasy T.H."/>
            <person name="Goodman H.M."/>
            <person name="Somerville C.R."/>
            <person name="Copenhaver G.P."/>
            <person name="Preuss D."/>
            <person name="Nierman W.C."/>
            <person name="White O."/>
            <person name="Eisen J.A."/>
            <person name="Salzberg S.L."/>
            <person name="Fraser C.M."/>
            <person name="Venter J.C."/>
        </authorList>
    </citation>
    <scope>NUCLEOTIDE SEQUENCE [LARGE SCALE GENOMIC DNA]</scope>
    <source>
        <strain>cv. Columbia</strain>
    </source>
</reference>
<reference key="2">
    <citation type="journal article" date="2017" name="Plant J.">
        <title>Araport11: a complete reannotation of the Arabidopsis thaliana reference genome.</title>
        <authorList>
            <person name="Cheng C.Y."/>
            <person name="Krishnakumar V."/>
            <person name="Chan A.P."/>
            <person name="Thibaud-Nissen F."/>
            <person name="Schobel S."/>
            <person name="Town C.D."/>
        </authorList>
    </citation>
    <scope>GENOME REANNOTATION</scope>
    <source>
        <strain>cv. Columbia</strain>
    </source>
</reference>
<reference key="3">
    <citation type="submission" date="2009-03" db="EMBL/GenBank/DDBJ databases">
        <title>ORF cloning and analysis of Arabidopsis transcription factor genes.</title>
        <authorList>
            <person name="Fujita M."/>
            <person name="Mizukado S."/>
            <person name="Seki M."/>
            <person name="Shinozaki K."/>
            <person name="Mitsuda N."/>
            <person name="Takiguchi Y."/>
            <person name="Takagi M."/>
        </authorList>
    </citation>
    <scope>NUCLEOTIDE SEQUENCE [LARGE SCALE GENOMIC DNA]</scope>
</reference>
<reference key="4">
    <citation type="journal article" date="2008" name="Trends Plant Sci.">
        <title>The plant B3 superfamily.</title>
        <authorList>
            <person name="Swaminathan K."/>
            <person name="Peterson K."/>
            <person name="Jack T."/>
        </authorList>
    </citation>
    <scope>GENE FAMILY</scope>
</reference>
<sequence>MEAYDICKFWKLDMLEEFSQIVLKGKKKIILDIPSPSQQNKSDIVSLCPADSPETCNSSIPDWLVKVMRKENGYDPKLIIKRRVLCTTDLRKNQGCLSMHLSKLEKSDFLTEDETRFLDEDFLKAKRDGLKVFLVDPESDKHVVYLKKWNGNTVWKYVLSHGWNNVIDKKIFKVNDVIEIWSFRDGSGKLCFALSSPTRCGRSSSGHSS</sequence>
<evidence type="ECO:0000255" key="1">
    <source>
        <dbReference type="PROSITE-ProRule" id="PRU00326"/>
    </source>
</evidence>
<gene>
    <name type="ordered locus">At2g31420</name>
    <name type="ORF">T28P16.9</name>
</gene>
<protein>
    <recommendedName>
        <fullName>B3 domain-containing protein At2g31420</fullName>
    </recommendedName>
</protein>
<name>Y2142_ARATH</name>